<protein>
    <recommendedName>
        <fullName evidence="1">DNA-directed RNA polymerase subunit beta'</fullName>
        <shortName evidence="1">RNAP subunit beta'</shortName>
        <ecNumber evidence="1">2.7.7.6</ecNumber>
    </recommendedName>
    <alternativeName>
        <fullName evidence="1">RNA polymerase subunit beta'</fullName>
    </alternativeName>
    <alternativeName>
        <fullName evidence="1">Transcriptase subunit beta'</fullName>
    </alternativeName>
</protein>
<accession>Q3YUZ6</accession>
<name>RPOC_SHISS</name>
<organism>
    <name type="scientific">Shigella sonnei (strain Ss046)</name>
    <dbReference type="NCBI Taxonomy" id="300269"/>
    <lineage>
        <taxon>Bacteria</taxon>
        <taxon>Pseudomonadati</taxon>
        <taxon>Pseudomonadota</taxon>
        <taxon>Gammaproteobacteria</taxon>
        <taxon>Enterobacterales</taxon>
        <taxon>Enterobacteriaceae</taxon>
        <taxon>Shigella</taxon>
    </lineage>
</organism>
<proteinExistence type="inferred from homology"/>
<gene>
    <name evidence="1" type="primary">rpoC</name>
    <name type="ordered locus">SSON_4161</name>
</gene>
<sequence>MKDLLKFLKAQTKTEEFDAIKIALASPDMIRSWSFGEVKKPETINYRTFKPERDGLFCARIFGPVKDYECLCGKYKRLKHRGVICEKCGVEVTQTKVRRERMGHIELASPTAHIWFLKSLPSRIGLLLDMPLRDIERVLYFESYVVIEGGMTNLERQQILTEEQYLDALEEFGDEFDAKMGAEAIQALLKSMDLEQECEQLREELNETNSETKRKKLTKRIKLLEAFVQSGNKPEWMILTVLPVLPPDLRPLVPLDGGRFATSDLNDLYRRVINRNNRLKRLLDLAAPDIIVRNEKRMLQEAVDALLDNGRRGRAITGSNKRPLKSLADMIKGKQGRFRQNLLGKRVDYSGRSVITVGPYLRLHQCGLPKKMALELFKPFIYGKLELRGLATTIKAAKKMVEREEAVVWDILDEVIREHPVLLNRAPTLHRLGIQAFEPVLIEGKAIQLHPLVCAAYNADFDGDQMAVHVPLTLEAQLEARALMMSTNNILSPANGEPIIVPSQDVVLGLYYMTRDCVNAKGEGMVLTGPKEAERLYRSGLASLHARVKVRITEYEKDANGELVAKTSLKDTTVGRAILWMIVPKGLPYSIVNQALGKKAISKMLNTCYRILGLKPTVIFADQIMYTGFAYAARSGASVGIDDMVIPEKKHEIISEAEAEVAEIQEQFQSGLVTAGERYNKVIDIWAAANDRVSKAMMDNLQTETVINRDGQEEKQVSFNSIYMMADSGARGSAAQIRQLAGMRGLMAKPDGSIIETPITANFREGLNVLQYFISTHGARKGLADTALKTANSGYLTRRLVDVAQDLVVTEDDCGTHEGIMMTPVIEGGDVKEPLRDRVLGRVTAEDVLKPGTADILVPRNTLLHEQWCDLLEENSVDAVKVRSVVSCDTDFGVCAHCYGRDLARGHIINKGEAIGVIAAQSIGEPGTQLTMRTFHIGGAASRAAAESSIQVKNKGSIKLSNVKSVVNSSGKLVITSRNTELKLIDEFGRTKESYKVPYGAVLAKGDGEQVAGGETVANWDPHTMPVITEVSGFVRFTDMIDGQTITRQTDELTGLSSLVVLDSAERTAGGKDLRPALKIVDAQGNDVLIPGTDMPAQYFLPGKAIVQLEDGVQISSGDTLARIPQESGGTKDITGGLPRVADLFEARRPKEPAILAEISGIVSFGKETKGKRRLVITPVDGSDPYEEMIPKWRQLNVFEGERVERGDVISDGPEAPHDILRLRGVHAVTRYIVNEVQDVYRLQGVKINDKHIEVIVRQMLRKATIVNAGSSDFLEGEQVEYSRVKIANRELEANGKVGATYSRDLLGITKASLATESFISAASFQETTRVLTEAAVAGKRDELRGLKENVIVGRLIPAGTGYAYHQDRMRRRAAGEAPAAPQVTAEDASASLAELLNAGLGGSDNE</sequence>
<keyword id="KW-0007">Acetylation</keyword>
<keyword id="KW-0240">DNA-directed RNA polymerase</keyword>
<keyword id="KW-0460">Magnesium</keyword>
<keyword id="KW-0479">Metal-binding</keyword>
<keyword id="KW-0548">Nucleotidyltransferase</keyword>
<keyword id="KW-1185">Reference proteome</keyword>
<keyword id="KW-0804">Transcription</keyword>
<keyword id="KW-0808">Transferase</keyword>
<keyword id="KW-0862">Zinc</keyword>
<comment type="function">
    <text evidence="1">DNA-dependent RNA polymerase catalyzes the transcription of DNA into RNA using the four ribonucleoside triphosphates as substrates.</text>
</comment>
<comment type="catalytic activity">
    <reaction evidence="1">
        <text>RNA(n) + a ribonucleoside 5'-triphosphate = RNA(n+1) + diphosphate</text>
        <dbReference type="Rhea" id="RHEA:21248"/>
        <dbReference type="Rhea" id="RHEA-COMP:14527"/>
        <dbReference type="Rhea" id="RHEA-COMP:17342"/>
        <dbReference type="ChEBI" id="CHEBI:33019"/>
        <dbReference type="ChEBI" id="CHEBI:61557"/>
        <dbReference type="ChEBI" id="CHEBI:140395"/>
        <dbReference type="EC" id="2.7.7.6"/>
    </reaction>
</comment>
<comment type="cofactor">
    <cofactor evidence="1">
        <name>Mg(2+)</name>
        <dbReference type="ChEBI" id="CHEBI:18420"/>
    </cofactor>
    <text evidence="1">Binds 1 Mg(2+) ion per subunit.</text>
</comment>
<comment type="cofactor">
    <cofactor evidence="1">
        <name>Zn(2+)</name>
        <dbReference type="ChEBI" id="CHEBI:29105"/>
    </cofactor>
    <text evidence="1">Binds 2 Zn(2+) ions per subunit.</text>
</comment>
<comment type="subunit">
    <text evidence="1">The RNAP catalytic core consists of 2 alpha, 1 beta, 1 beta' and 1 omega subunit. When a sigma factor is associated with the core the holoenzyme is formed, which can initiate transcription.</text>
</comment>
<comment type="similarity">
    <text evidence="1">Belongs to the RNA polymerase beta' chain family.</text>
</comment>
<reference key="1">
    <citation type="journal article" date="2005" name="Nucleic Acids Res.">
        <title>Genome dynamics and diversity of Shigella species, the etiologic agents of bacillary dysentery.</title>
        <authorList>
            <person name="Yang F."/>
            <person name="Yang J."/>
            <person name="Zhang X."/>
            <person name="Chen L."/>
            <person name="Jiang Y."/>
            <person name="Yan Y."/>
            <person name="Tang X."/>
            <person name="Wang J."/>
            <person name="Xiong Z."/>
            <person name="Dong J."/>
            <person name="Xue Y."/>
            <person name="Zhu Y."/>
            <person name="Xu X."/>
            <person name="Sun L."/>
            <person name="Chen S."/>
            <person name="Nie H."/>
            <person name="Peng J."/>
            <person name="Xu J."/>
            <person name="Wang Y."/>
            <person name="Yuan Z."/>
            <person name="Wen Y."/>
            <person name="Yao Z."/>
            <person name="Shen Y."/>
            <person name="Qiang B."/>
            <person name="Hou Y."/>
            <person name="Yu J."/>
            <person name="Jin Q."/>
        </authorList>
    </citation>
    <scope>NUCLEOTIDE SEQUENCE [LARGE SCALE GENOMIC DNA]</scope>
    <source>
        <strain>Ss046</strain>
    </source>
</reference>
<dbReference type="EC" id="2.7.7.6" evidence="1"/>
<dbReference type="EMBL" id="CP000038">
    <property type="protein sequence ID" value="AAZ90666.1"/>
    <property type="molecule type" value="Genomic_DNA"/>
</dbReference>
<dbReference type="RefSeq" id="WP_000653944.1">
    <property type="nucleotide sequence ID" value="NC_007384.1"/>
</dbReference>
<dbReference type="SMR" id="Q3YUZ6"/>
<dbReference type="GeneID" id="93777906"/>
<dbReference type="KEGG" id="ssn:SSON_4161"/>
<dbReference type="HOGENOM" id="CLU_000524_3_1_6"/>
<dbReference type="Proteomes" id="UP000002529">
    <property type="component" value="Chromosome"/>
</dbReference>
<dbReference type="GO" id="GO:0000428">
    <property type="term" value="C:DNA-directed RNA polymerase complex"/>
    <property type="evidence" value="ECO:0007669"/>
    <property type="project" value="UniProtKB-KW"/>
</dbReference>
<dbReference type="GO" id="GO:0003677">
    <property type="term" value="F:DNA binding"/>
    <property type="evidence" value="ECO:0007669"/>
    <property type="project" value="UniProtKB-UniRule"/>
</dbReference>
<dbReference type="GO" id="GO:0003899">
    <property type="term" value="F:DNA-directed RNA polymerase activity"/>
    <property type="evidence" value="ECO:0007669"/>
    <property type="project" value="UniProtKB-UniRule"/>
</dbReference>
<dbReference type="GO" id="GO:0000287">
    <property type="term" value="F:magnesium ion binding"/>
    <property type="evidence" value="ECO:0007669"/>
    <property type="project" value="UniProtKB-UniRule"/>
</dbReference>
<dbReference type="GO" id="GO:0008270">
    <property type="term" value="F:zinc ion binding"/>
    <property type="evidence" value="ECO:0007669"/>
    <property type="project" value="UniProtKB-UniRule"/>
</dbReference>
<dbReference type="GO" id="GO:0006351">
    <property type="term" value="P:DNA-templated transcription"/>
    <property type="evidence" value="ECO:0007669"/>
    <property type="project" value="UniProtKB-UniRule"/>
</dbReference>
<dbReference type="CDD" id="cd02655">
    <property type="entry name" value="RNAP_beta'_C"/>
    <property type="match status" value="1"/>
</dbReference>
<dbReference type="CDD" id="cd01609">
    <property type="entry name" value="RNAP_beta'_N"/>
    <property type="match status" value="1"/>
</dbReference>
<dbReference type="FunFam" id="1.10.132.30:FF:000003">
    <property type="entry name" value="DNA-directed RNA polymerase subunit beta"/>
    <property type="match status" value="1"/>
</dbReference>
<dbReference type="FunFam" id="1.10.150.390:FF:000002">
    <property type="entry name" value="DNA-directed RNA polymerase subunit beta"/>
    <property type="match status" value="1"/>
</dbReference>
<dbReference type="FunFam" id="1.10.274.100:FF:000002">
    <property type="entry name" value="DNA-directed RNA polymerase subunit beta"/>
    <property type="match status" value="1"/>
</dbReference>
<dbReference type="FunFam" id="1.10.40.90:FF:000001">
    <property type="entry name" value="DNA-directed RNA polymerase subunit beta"/>
    <property type="match status" value="1"/>
</dbReference>
<dbReference type="FunFam" id="2.40.50.100:FF:000012">
    <property type="entry name" value="DNA-directed RNA polymerase subunit beta"/>
    <property type="match status" value="1"/>
</dbReference>
<dbReference type="FunFam" id="2.40.50.100:FF:000016">
    <property type="entry name" value="DNA-directed RNA polymerase subunit beta"/>
    <property type="match status" value="1"/>
</dbReference>
<dbReference type="FunFam" id="2.40.50.100:FF:000019">
    <property type="entry name" value="DNA-directed RNA polymerase subunit beta"/>
    <property type="match status" value="1"/>
</dbReference>
<dbReference type="FunFam" id="4.10.860.120:FF:000001">
    <property type="entry name" value="DNA-directed RNA polymerase subunit beta"/>
    <property type="match status" value="1"/>
</dbReference>
<dbReference type="Gene3D" id="1.10.132.30">
    <property type="match status" value="1"/>
</dbReference>
<dbReference type="Gene3D" id="1.10.150.390">
    <property type="match status" value="1"/>
</dbReference>
<dbReference type="Gene3D" id="1.10.1790.20">
    <property type="match status" value="1"/>
</dbReference>
<dbReference type="Gene3D" id="1.10.40.90">
    <property type="match status" value="1"/>
</dbReference>
<dbReference type="Gene3D" id="2.40.40.20">
    <property type="match status" value="1"/>
</dbReference>
<dbReference type="Gene3D" id="2.40.50.100">
    <property type="match status" value="3"/>
</dbReference>
<dbReference type="Gene3D" id="4.10.860.120">
    <property type="entry name" value="RNA polymerase II, clamp domain"/>
    <property type="match status" value="1"/>
</dbReference>
<dbReference type="Gene3D" id="1.10.274.100">
    <property type="entry name" value="RNA polymerase Rpb1, domain 3"/>
    <property type="match status" value="1"/>
</dbReference>
<dbReference type="HAMAP" id="MF_01322">
    <property type="entry name" value="RNApol_bact_RpoC"/>
    <property type="match status" value="1"/>
</dbReference>
<dbReference type="InterPro" id="IPR045867">
    <property type="entry name" value="DNA-dir_RpoC_beta_prime"/>
</dbReference>
<dbReference type="InterPro" id="IPR012754">
    <property type="entry name" value="DNA-dir_RpoC_beta_prime_bact"/>
</dbReference>
<dbReference type="InterPro" id="IPR000722">
    <property type="entry name" value="RNA_pol_asu"/>
</dbReference>
<dbReference type="InterPro" id="IPR006592">
    <property type="entry name" value="RNA_pol_N"/>
</dbReference>
<dbReference type="InterPro" id="IPR007080">
    <property type="entry name" value="RNA_pol_Rpb1_1"/>
</dbReference>
<dbReference type="InterPro" id="IPR007066">
    <property type="entry name" value="RNA_pol_Rpb1_3"/>
</dbReference>
<dbReference type="InterPro" id="IPR042102">
    <property type="entry name" value="RNA_pol_Rpb1_3_sf"/>
</dbReference>
<dbReference type="InterPro" id="IPR007083">
    <property type="entry name" value="RNA_pol_Rpb1_4"/>
</dbReference>
<dbReference type="InterPro" id="IPR007081">
    <property type="entry name" value="RNA_pol_Rpb1_5"/>
</dbReference>
<dbReference type="InterPro" id="IPR044893">
    <property type="entry name" value="RNA_pol_Rpb1_clamp_domain"/>
</dbReference>
<dbReference type="InterPro" id="IPR038120">
    <property type="entry name" value="Rpb1_funnel_sf"/>
</dbReference>
<dbReference type="NCBIfam" id="TIGR02386">
    <property type="entry name" value="rpoC_TIGR"/>
    <property type="match status" value="1"/>
</dbReference>
<dbReference type="PANTHER" id="PTHR19376">
    <property type="entry name" value="DNA-DIRECTED RNA POLYMERASE"/>
    <property type="match status" value="1"/>
</dbReference>
<dbReference type="PANTHER" id="PTHR19376:SF54">
    <property type="entry name" value="DNA-DIRECTED RNA POLYMERASE SUBUNIT BETA"/>
    <property type="match status" value="1"/>
</dbReference>
<dbReference type="Pfam" id="PF04997">
    <property type="entry name" value="RNA_pol_Rpb1_1"/>
    <property type="match status" value="1"/>
</dbReference>
<dbReference type="Pfam" id="PF00623">
    <property type="entry name" value="RNA_pol_Rpb1_2"/>
    <property type="match status" value="2"/>
</dbReference>
<dbReference type="Pfam" id="PF04983">
    <property type="entry name" value="RNA_pol_Rpb1_3"/>
    <property type="match status" value="1"/>
</dbReference>
<dbReference type="Pfam" id="PF05000">
    <property type="entry name" value="RNA_pol_Rpb1_4"/>
    <property type="match status" value="1"/>
</dbReference>
<dbReference type="Pfam" id="PF04998">
    <property type="entry name" value="RNA_pol_Rpb1_5"/>
    <property type="match status" value="1"/>
</dbReference>
<dbReference type="SMART" id="SM00663">
    <property type="entry name" value="RPOLA_N"/>
    <property type="match status" value="1"/>
</dbReference>
<dbReference type="SUPFAM" id="SSF64484">
    <property type="entry name" value="beta and beta-prime subunits of DNA dependent RNA-polymerase"/>
    <property type="match status" value="1"/>
</dbReference>
<feature type="chain" id="PRO_0000225579" description="DNA-directed RNA polymerase subunit beta'">
    <location>
        <begin position="1"/>
        <end position="1407"/>
    </location>
</feature>
<feature type="binding site" evidence="1">
    <location>
        <position position="70"/>
    </location>
    <ligand>
        <name>Zn(2+)</name>
        <dbReference type="ChEBI" id="CHEBI:29105"/>
        <label>1</label>
    </ligand>
</feature>
<feature type="binding site" evidence="1">
    <location>
        <position position="72"/>
    </location>
    <ligand>
        <name>Zn(2+)</name>
        <dbReference type="ChEBI" id="CHEBI:29105"/>
        <label>1</label>
    </ligand>
</feature>
<feature type="binding site" evidence="1">
    <location>
        <position position="85"/>
    </location>
    <ligand>
        <name>Zn(2+)</name>
        <dbReference type="ChEBI" id="CHEBI:29105"/>
        <label>1</label>
    </ligand>
</feature>
<feature type="binding site" evidence="1">
    <location>
        <position position="88"/>
    </location>
    <ligand>
        <name>Zn(2+)</name>
        <dbReference type="ChEBI" id="CHEBI:29105"/>
        <label>1</label>
    </ligand>
</feature>
<feature type="binding site" evidence="1">
    <location>
        <position position="460"/>
    </location>
    <ligand>
        <name>Mg(2+)</name>
        <dbReference type="ChEBI" id="CHEBI:18420"/>
    </ligand>
</feature>
<feature type="binding site" evidence="1">
    <location>
        <position position="462"/>
    </location>
    <ligand>
        <name>Mg(2+)</name>
        <dbReference type="ChEBI" id="CHEBI:18420"/>
    </ligand>
</feature>
<feature type="binding site" evidence="1">
    <location>
        <position position="464"/>
    </location>
    <ligand>
        <name>Mg(2+)</name>
        <dbReference type="ChEBI" id="CHEBI:18420"/>
    </ligand>
</feature>
<feature type="binding site" evidence="1">
    <location>
        <position position="814"/>
    </location>
    <ligand>
        <name>Zn(2+)</name>
        <dbReference type="ChEBI" id="CHEBI:29105"/>
        <label>2</label>
    </ligand>
</feature>
<feature type="binding site" evidence="1">
    <location>
        <position position="888"/>
    </location>
    <ligand>
        <name>Zn(2+)</name>
        <dbReference type="ChEBI" id="CHEBI:29105"/>
        <label>2</label>
    </ligand>
</feature>
<feature type="binding site" evidence="1">
    <location>
        <position position="895"/>
    </location>
    <ligand>
        <name>Zn(2+)</name>
        <dbReference type="ChEBI" id="CHEBI:29105"/>
        <label>2</label>
    </ligand>
</feature>
<feature type="binding site" evidence="1">
    <location>
        <position position="898"/>
    </location>
    <ligand>
        <name>Zn(2+)</name>
        <dbReference type="ChEBI" id="CHEBI:29105"/>
        <label>2</label>
    </ligand>
</feature>
<feature type="modified residue" description="N6-acetyllysine" evidence="1">
    <location>
        <position position="972"/>
    </location>
</feature>
<evidence type="ECO:0000255" key="1">
    <source>
        <dbReference type="HAMAP-Rule" id="MF_01322"/>
    </source>
</evidence>